<accession>B5R9J8</accession>
<dbReference type="EMBL" id="AM933173">
    <property type="protein sequence ID" value="CAR40047.1"/>
    <property type="molecule type" value="Genomic_DNA"/>
</dbReference>
<dbReference type="RefSeq" id="WP_000148570.1">
    <property type="nucleotide sequence ID" value="NC_011274.1"/>
</dbReference>
<dbReference type="SMR" id="B5R9J8"/>
<dbReference type="KEGG" id="seg:SG4285"/>
<dbReference type="HOGENOM" id="CLU_128576_0_0_6"/>
<dbReference type="Proteomes" id="UP000008321">
    <property type="component" value="Chromosome"/>
</dbReference>
<dbReference type="GO" id="GO:0009347">
    <property type="term" value="C:aspartate carbamoyltransferase complex"/>
    <property type="evidence" value="ECO:0007669"/>
    <property type="project" value="InterPro"/>
</dbReference>
<dbReference type="GO" id="GO:0046872">
    <property type="term" value="F:metal ion binding"/>
    <property type="evidence" value="ECO:0007669"/>
    <property type="project" value="UniProtKB-KW"/>
</dbReference>
<dbReference type="GO" id="GO:0006207">
    <property type="term" value="P:'de novo' pyrimidine nucleobase biosynthetic process"/>
    <property type="evidence" value="ECO:0007669"/>
    <property type="project" value="InterPro"/>
</dbReference>
<dbReference type="GO" id="GO:0006221">
    <property type="term" value="P:pyrimidine nucleotide biosynthetic process"/>
    <property type="evidence" value="ECO:0007669"/>
    <property type="project" value="UniProtKB-UniRule"/>
</dbReference>
<dbReference type="FunFam" id="2.30.30.20:FF:000001">
    <property type="entry name" value="Aspartate carbamoyltransferase regulatory chain"/>
    <property type="match status" value="1"/>
</dbReference>
<dbReference type="FunFam" id="3.30.70.140:FF:000001">
    <property type="entry name" value="Aspartate carbamoyltransferase regulatory chain"/>
    <property type="match status" value="1"/>
</dbReference>
<dbReference type="Gene3D" id="2.30.30.20">
    <property type="entry name" value="Aspartate carbamoyltransferase regulatory subunit, C-terminal domain"/>
    <property type="match status" value="1"/>
</dbReference>
<dbReference type="Gene3D" id="3.30.70.140">
    <property type="entry name" value="Aspartate carbamoyltransferase regulatory subunit, N-terminal domain"/>
    <property type="match status" value="1"/>
</dbReference>
<dbReference type="HAMAP" id="MF_00002">
    <property type="entry name" value="Asp_carb_tr_reg"/>
    <property type="match status" value="1"/>
</dbReference>
<dbReference type="InterPro" id="IPR020545">
    <property type="entry name" value="Asp_carbamoyltransf_reg_N"/>
</dbReference>
<dbReference type="InterPro" id="IPR002801">
    <property type="entry name" value="Asp_carbamoylTrfase_reg"/>
</dbReference>
<dbReference type="InterPro" id="IPR020542">
    <property type="entry name" value="Asp_carbamoyltrfase_reg_C"/>
</dbReference>
<dbReference type="InterPro" id="IPR036792">
    <property type="entry name" value="Asp_carbatrfase_reg_C_sf"/>
</dbReference>
<dbReference type="InterPro" id="IPR036793">
    <property type="entry name" value="Asp_carbatrfase_reg_N_sf"/>
</dbReference>
<dbReference type="NCBIfam" id="TIGR00240">
    <property type="entry name" value="ATCase_reg"/>
    <property type="match status" value="1"/>
</dbReference>
<dbReference type="PANTHER" id="PTHR35805">
    <property type="entry name" value="ASPARTATE CARBAMOYLTRANSFERASE REGULATORY CHAIN"/>
    <property type="match status" value="1"/>
</dbReference>
<dbReference type="PANTHER" id="PTHR35805:SF1">
    <property type="entry name" value="ASPARTATE CARBAMOYLTRANSFERASE REGULATORY CHAIN"/>
    <property type="match status" value="1"/>
</dbReference>
<dbReference type="Pfam" id="PF01948">
    <property type="entry name" value="PyrI"/>
    <property type="match status" value="1"/>
</dbReference>
<dbReference type="Pfam" id="PF02748">
    <property type="entry name" value="PyrI_C"/>
    <property type="match status" value="1"/>
</dbReference>
<dbReference type="SUPFAM" id="SSF57825">
    <property type="entry name" value="Aspartate carbamoyltransferase, Regulatory-chain, C-terminal domain"/>
    <property type="match status" value="1"/>
</dbReference>
<dbReference type="SUPFAM" id="SSF54893">
    <property type="entry name" value="Aspartate carbamoyltransferase, Regulatory-chain, N-terminal domain"/>
    <property type="match status" value="1"/>
</dbReference>
<reference key="1">
    <citation type="journal article" date="2008" name="Genome Res.">
        <title>Comparative genome analysis of Salmonella enteritidis PT4 and Salmonella gallinarum 287/91 provides insights into evolutionary and host adaptation pathways.</title>
        <authorList>
            <person name="Thomson N.R."/>
            <person name="Clayton D.J."/>
            <person name="Windhorst D."/>
            <person name="Vernikos G."/>
            <person name="Davidson S."/>
            <person name="Churcher C."/>
            <person name="Quail M.A."/>
            <person name="Stevens M."/>
            <person name="Jones M.A."/>
            <person name="Watson M."/>
            <person name="Barron A."/>
            <person name="Layton A."/>
            <person name="Pickard D."/>
            <person name="Kingsley R.A."/>
            <person name="Bignell A."/>
            <person name="Clark L."/>
            <person name="Harris B."/>
            <person name="Ormond D."/>
            <person name="Abdellah Z."/>
            <person name="Brooks K."/>
            <person name="Cherevach I."/>
            <person name="Chillingworth T."/>
            <person name="Woodward J."/>
            <person name="Norberczak H."/>
            <person name="Lord A."/>
            <person name="Arrowsmith C."/>
            <person name="Jagels K."/>
            <person name="Moule S."/>
            <person name="Mungall K."/>
            <person name="Saunders M."/>
            <person name="Whitehead S."/>
            <person name="Chabalgoity J.A."/>
            <person name="Maskell D."/>
            <person name="Humphreys T."/>
            <person name="Roberts M."/>
            <person name="Barrow P.A."/>
            <person name="Dougan G."/>
            <person name="Parkhill J."/>
        </authorList>
    </citation>
    <scope>NUCLEOTIDE SEQUENCE [LARGE SCALE GENOMIC DNA]</scope>
    <source>
        <strain>287/91 / NCTC 13346</strain>
    </source>
</reference>
<keyword id="KW-0479">Metal-binding</keyword>
<keyword id="KW-0665">Pyrimidine biosynthesis</keyword>
<keyword id="KW-0862">Zinc</keyword>
<comment type="function">
    <text evidence="1">Involved in allosteric regulation of aspartate carbamoyltransferase.</text>
</comment>
<comment type="cofactor">
    <cofactor evidence="1">
        <name>Zn(2+)</name>
        <dbReference type="ChEBI" id="CHEBI:29105"/>
    </cofactor>
    <text evidence="1">Binds 1 zinc ion per subunit.</text>
</comment>
<comment type="subunit">
    <text evidence="1">Contains catalytic and regulatory chains.</text>
</comment>
<comment type="similarity">
    <text evidence="1">Belongs to the PyrI family.</text>
</comment>
<protein>
    <recommendedName>
        <fullName evidence="1">Aspartate carbamoyltransferase regulatory chain</fullName>
    </recommendedName>
</protein>
<proteinExistence type="inferred from homology"/>
<organism>
    <name type="scientific">Salmonella gallinarum (strain 287/91 / NCTC 13346)</name>
    <dbReference type="NCBI Taxonomy" id="550538"/>
    <lineage>
        <taxon>Bacteria</taxon>
        <taxon>Pseudomonadati</taxon>
        <taxon>Pseudomonadota</taxon>
        <taxon>Gammaproteobacteria</taxon>
        <taxon>Enterobacterales</taxon>
        <taxon>Enterobacteriaceae</taxon>
        <taxon>Salmonella</taxon>
    </lineage>
</organism>
<feature type="chain" id="PRO_1000088836" description="Aspartate carbamoyltransferase regulatory chain">
    <location>
        <begin position="1"/>
        <end position="153"/>
    </location>
</feature>
<feature type="binding site" evidence="1">
    <location>
        <position position="109"/>
    </location>
    <ligand>
        <name>Zn(2+)</name>
        <dbReference type="ChEBI" id="CHEBI:29105"/>
    </ligand>
</feature>
<feature type="binding site" evidence="1">
    <location>
        <position position="114"/>
    </location>
    <ligand>
        <name>Zn(2+)</name>
        <dbReference type="ChEBI" id="CHEBI:29105"/>
    </ligand>
</feature>
<feature type="binding site" evidence="1">
    <location>
        <position position="138"/>
    </location>
    <ligand>
        <name>Zn(2+)</name>
        <dbReference type="ChEBI" id="CHEBI:29105"/>
    </ligand>
</feature>
<feature type="binding site" evidence="1">
    <location>
        <position position="141"/>
    </location>
    <ligand>
        <name>Zn(2+)</name>
        <dbReference type="ChEBI" id="CHEBI:29105"/>
    </ligand>
</feature>
<name>PYRI_SALG2</name>
<evidence type="ECO:0000255" key="1">
    <source>
        <dbReference type="HAMAP-Rule" id="MF_00002"/>
    </source>
</evidence>
<sequence>MTHDNKLQVEAIKCGTVIDHIPAQVGFKLLSLFKLTETDQRITIGLNLPSGEMGRKDLIKIENTFLTEEQVNQLALYAPQATVNRIDNYDVVGKSRPSLPERINNVLVCPNSNCISHAEPVSSSFAVKKRANDIALKCKYCEKEFSHYVVLAN</sequence>
<gene>
    <name evidence="1" type="primary">pyrI</name>
    <name type="ordered locus">SG4285</name>
</gene>